<organism>
    <name type="scientific">Christiangramia forsetii (strain DSM 17595 / CGMCC 1.15422 / KT0803)</name>
    <name type="common">Gramella forsetii</name>
    <dbReference type="NCBI Taxonomy" id="411154"/>
    <lineage>
        <taxon>Bacteria</taxon>
        <taxon>Pseudomonadati</taxon>
        <taxon>Bacteroidota</taxon>
        <taxon>Flavobacteriia</taxon>
        <taxon>Flavobacteriales</taxon>
        <taxon>Flavobacteriaceae</taxon>
        <taxon>Christiangramia</taxon>
    </lineage>
</organism>
<protein>
    <recommendedName>
        <fullName evidence="1">Pyridoxine/pyridoxamine 5'-phosphate oxidase</fullName>
        <ecNumber evidence="1">1.4.3.5</ecNumber>
    </recommendedName>
    <alternativeName>
        <fullName evidence="1">PNP/PMP oxidase</fullName>
        <shortName evidence="1">PNPOx</shortName>
    </alternativeName>
    <alternativeName>
        <fullName evidence="1">Pyridoxal 5'-phosphate synthase</fullName>
    </alternativeName>
</protein>
<keyword id="KW-0285">Flavoprotein</keyword>
<keyword id="KW-0288">FMN</keyword>
<keyword id="KW-0560">Oxidoreductase</keyword>
<keyword id="KW-0664">Pyridoxine biosynthesis</keyword>
<sequence>MEKDLANYRRSYEKGELLERDIPDDPYILFESWFNLADNSKNVEEANAMSISTVGKDLMPKTRVVLLKSFDPDGLYFYTNYDSVKGRDLDENPKCCISFFWPSLEKQIIIQGEVVKVSSKKSEEYFHSRPRGSQLGAHASNQSSVIPSREYLEERLTKLEQKYLKKEIPKPKEWGGFLFKPVAFEFWQGRASRLHDRILFTKKDDNWKIERLAP</sequence>
<proteinExistence type="inferred from homology"/>
<dbReference type="EC" id="1.4.3.5" evidence="1"/>
<dbReference type="EMBL" id="CU207366">
    <property type="protein sequence ID" value="CAL66805.1"/>
    <property type="molecule type" value="Genomic_DNA"/>
</dbReference>
<dbReference type="RefSeq" id="WP_011709713.1">
    <property type="nucleotide sequence ID" value="NC_008571.1"/>
</dbReference>
<dbReference type="SMR" id="A0M2G0"/>
<dbReference type="STRING" id="411154.GFO_1835"/>
<dbReference type="KEGG" id="gfo:GFO_1835"/>
<dbReference type="eggNOG" id="COG0259">
    <property type="taxonomic scope" value="Bacteria"/>
</dbReference>
<dbReference type="HOGENOM" id="CLU_032263_2_2_10"/>
<dbReference type="OrthoDB" id="9780392at2"/>
<dbReference type="UniPathway" id="UPA01068">
    <property type="reaction ID" value="UER00304"/>
</dbReference>
<dbReference type="UniPathway" id="UPA01068">
    <property type="reaction ID" value="UER00305"/>
</dbReference>
<dbReference type="Proteomes" id="UP000000755">
    <property type="component" value="Chromosome"/>
</dbReference>
<dbReference type="GO" id="GO:0010181">
    <property type="term" value="F:FMN binding"/>
    <property type="evidence" value="ECO:0007669"/>
    <property type="project" value="UniProtKB-UniRule"/>
</dbReference>
<dbReference type="GO" id="GO:0004733">
    <property type="term" value="F:pyridoxamine phosphate oxidase activity"/>
    <property type="evidence" value="ECO:0007669"/>
    <property type="project" value="UniProtKB-UniRule"/>
</dbReference>
<dbReference type="GO" id="GO:0008615">
    <property type="term" value="P:pyridoxine biosynthetic process"/>
    <property type="evidence" value="ECO:0007669"/>
    <property type="project" value="UniProtKB-KW"/>
</dbReference>
<dbReference type="FunFam" id="2.30.110.10:FF:000020">
    <property type="entry name" value="PNPO isoform 11"/>
    <property type="match status" value="1"/>
</dbReference>
<dbReference type="Gene3D" id="2.30.110.10">
    <property type="entry name" value="Electron Transport, Fmn-binding Protein, Chain A"/>
    <property type="match status" value="1"/>
</dbReference>
<dbReference type="HAMAP" id="MF_01629">
    <property type="entry name" value="PdxH"/>
    <property type="match status" value="1"/>
</dbReference>
<dbReference type="InterPro" id="IPR000659">
    <property type="entry name" value="Pyridox_Oxase"/>
</dbReference>
<dbReference type="InterPro" id="IPR019740">
    <property type="entry name" value="Pyridox_Oxase_CS"/>
</dbReference>
<dbReference type="InterPro" id="IPR011576">
    <property type="entry name" value="Pyridox_Oxase_N"/>
</dbReference>
<dbReference type="InterPro" id="IPR019576">
    <property type="entry name" value="Pyridoxamine_oxidase_dimer_C"/>
</dbReference>
<dbReference type="InterPro" id="IPR012349">
    <property type="entry name" value="Split_barrel_FMN-bd"/>
</dbReference>
<dbReference type="NCBIfam" id="TIGR00558">
    <property type="entry name" value="pdxH"/>
    <property type="match status" value="1"/>
</dbReference>
<dbReference type="NCBIfam" id="NF004231">
    <property type="entry name" value="PRK05679.1"/>
    <property type="match status" value="1"/>
</dbReference>
<dbReference type="PANTHER" id="PTHR10851:SF0">
    <property type="entry name" value="PYRIDOXINE-5'-PHOSPHATE OXIDASE"/>
    <property type="match status" value="1"/>
</dbReference>
<dbReference type="PANTHER" id="PTHR10851">
    <property type="entry name" value="PYRIDOXINE-5-PHOSPHATE OXIDASE"/>
    <property type="match status" value="1"/>
</dbReference>
<dbReference type="Pfam" id="PF10590">
    <property type="entry name" value="PNP_phzG_C"/>
    <property type="match status" value="1"/>
</dbReference>
<dbReference type="Pfam" id="PF01243">
    <property type="entry name" value="PNPOx_N"/>
    <property type="match status" value="1"/>
</dbReference>
<dbReference type="PIRSF" id="PIRSF000190">
    <property type="entry name" value="Pyd_amn-ph_oxd"/>
    <property type="match status" value="1"/>
</dbReference>
<dbReference type="SUPFAM" id="SSF50475">
    <property type="entry name" value="FMN-binding split barrel"/>
    <property type="match status" value="1"/>
</dbReference>
<dbReference type="PROSITE" id="PS01064">
    <property type="entry name" value="PYRIDOX_OXIDASE"/>
    <property type="match status" value="1"/>
</dbReference>
<feature type="chain" id="PRO_0000292294" description="Pyridoxine/pyridoxamine 5'-phosphate oxidase">
    <location>
        <begin position="1"/>
        <end position="214"/>
    </location>
</feature>
<feature type="binding site" evidence="1">
    <location>
        <begin position="9"/>
        <end position="12"/>
    </location>
    <ligand>
        <name>substrate</name>
    </ligand>
</feature>
<feature type="binding site" evidence="1">
    <location>
        <begin position="63"/>
        <end position="68"/>
    </location>
    <ligand>
        <name>FMN</name>
        <dbReference type="ChEBI" id="CHEBI:58210"/>
    </ligand>
</feature>
<feature type="binding site" evidence="1">
    <location>
        <position position="68"/>
    </location>
    <ligand>
        <name>substrate</name>
    </ligand>
</feature>
<feature type="binding site" evidence="1">
    <location>
        <begin position="78"/>
        <end position="79"/>
    </location>
    <ligand>
        <name>FMN</name>
        <dbReference type="ChEBI" id="CHEBI:58210"/>
    </ligand>
</feature>
<feature type="binding site" evidence="1">
    <location>
        <position position="85"/>
    </location>
    <ligand>
        <name>FMN</name>
        <dbReference type="ChEBI" id="CHEBI:58210"/>
    </ligand>
</feature>
<feature type="binding site" evidence="1">
    <location>
        <position position="107"/>
    </location>
    <ligand>
        <name>FMN</name>
        <dbReference type="ChEBI" id="CHEBI:58210"/>
    </ligand>
</feature>
<feature type="binding site" evidence="1">
    <location>
        <position position="125"/>
    </location>
    <ligand>
        <name>substrate</name>
    </ligand>
</feature>
<feature type="binding site" evidence="1">
    <location>
        <position position="129"/>
    </location>
    <ligand>
        <name>substrate</name>
    </ligand>
</feature>
<feature type="binding site" evidence="1">
    <location>
        <position position="133"/>
    </location>
    <ligand>
        <name>substrate</name>
    </ligand>
</feature>
<feature type="binding site" evidence="1">
    <location>
        <begin position="142"/>
        <end position="143"/>
    </location>
    <ligand>
        <name>FMN</name>
        <dbReference type="ChEBI" id="CHEBI:58210"/>
    </ligand>
</feature>
<feature type="binding site" evidence="1">
    <location>
        <position position="187"/>
    </location>
    <ligand>
        <name>FMN</name>
        <dbReference type="ChEBI" id="CHEBI:58210"/>
    </ligand>
</feature>
<feature type="binding site" evidence="1">
    <location>
        <begin position="193"/>
        <end position="195"/>
    </location>
    <ligand>
        <name>substrate</name>
    </ligand>
</feature>
<feature type="binding site" evidence="1">
    <location>
        <position position="197"/>
    </location>
    <ligand>
        <name>FMN</name>
        <dbReference type="ChEBI" id="CHEBI:58210"/>
    </ligand>
</feature>
<comment type="function">
    <text evidence="1">Catalyzes the oxidation of either pyridoxine 5'-phosphate (PNP) or pyridoxamine 5'-phosphate (PMP) into pyridoxal 5'-phosphate (PLP).</text>
</comment>
<comment type="catalytic activity">
    <reaction evidence="1">
        <text>pyridoxamine 5'-phosphate + O2 + H2O = pyridoxal 5'-phosphate + H2O2 + NH4(+)</text>
        <dbReference type="Rhea" id="RHEA:15817"/>
        <dbReference type="ChEBI" id="CHEBI:15377"/>
        <dbReference type="ChEBI" id="CHEBI:15379"/>
        <dbReference type="ChEBI" id="CHEBI:16240"/>
        <dbReference type="ChEBI" id="CHEBI:28938"/>
        <dbReference type="ChEBI" id="CHEBI:58451"/>
        <dbReference type="ChEBI" id="CHEBI:597326"/>
        <dbReference type="EC" id="1.4.3.5"/>
    </reaction>
</comment>
<comment type="catalytic activity">
    <reaction evidence="1">
        <text>pyridoxine 5'-phosphate + O2 = pyridoxal 5'-phosphate + H2O2</text>
        <dbReference type="Rhea" id="RHEA:15149"/>
        <dbReference type="ChEBI" id="CHEBI:15379"/>
        <dbReference type="ChEBI" id="CHEBI:16240"/>
        <dbReference type="ChEBI" id="CHEBI:58589"/>
        <dbReference type="ChEBI" id="CHEBI:597326"/>
        <dbReference type="EC" id="1.4.3.5"/>
    </reaction>
</comment>
<comment type="cofactor">
    <cofactor evidence="1">
        <name>FMN</name>
        <dbReference type="ChEBI" id="CHEBI:58210"/>
    </cofactor>
    <text evidence="1">Binds 1 FMN per subunit.</text>
</comment>
<comment type="pathway">
    <text evidence="1">Cofactor metabolism; pyridoxal 5'-phosphate salvage; pyridoxal 5'-phosphate from pyridoxamine 5'-phosphate: step 1/1.</text>
</comment>
<comment type="pathway">
    <text evidence="1">Cofactor metabolism; pyridoxal 5'-phosphate salvage; pyridoxal 5'-phosphate from pyridoxine 5'-phosphate: step 1/1.</text>
</comment>
<comment type="subunit">
    <text evidence="1">Homodimer.</text>
</comment>
<comment type="similarity">
    <text evidence="1">Belongs to the pyridoxamine 5'-phosphate oxidase family.</text>
</comment>
<name>PDXH_CHRFK</name>
<accession>A0M2G0</accession>
<gene>
    <name evidence="1" type="primary">pdxH</name>
    <name type="ordered locus">GFO_1835</name>
</gene>
<evidence type="ECO:0000255" key="1">
    <source>
        <dbReference type="HAMAP-Rule" id="MF_01629"/>
    </source>
</evidence>
<reference key="1">
    <citation type="journal article" date="2006" name="Environ. Microbiol.">
        <title>Whole genome analysis of the marine Bacteroidetes'Gramella forsetii' reveals adaptations to degradation of polymeric organic matter.</title>
        <authorList>
            <person name="Bauer M."/>
            <person name="Kube M."/>
            <person name="Teeling H."/>
            <person name="Richter M."/>
            <person name="Lombardot T."/>
            <person name="Allers E."/>
            <person name="Wuerdemann C.A."/>
            <person name="Quast C."/>
            <person name="Kuhl H."/>
            <person name="Knaust F."/>
            <person name="Woebken D."/>
            <person name="Bischof K."/>
            <person name="Mussmann M."/>
            <person name="Choudhuri J.V."/>
            <person name="Meyer F."/>
            <person name="Reinhardt R."/>
            <person name="Amann R.I."/>
            <person name="Gloeckner F.O."/>
        </authorList>
    </citation>
    <scope>NUCLEOTIDE SEQUENCE [LARGE SCALE GENOMIC DNA]</scope>
    <source>
        <strain>DSM 17595 / CGMCC 1.15422 / KT0803</strain>
    </source>
</reference>